<keyword id="KW-1185">Reference proteome</keyword>
<dbReference type="EMBL" id="AC134684">
    <property type="status" value="NOT_ANNOTATED_CDS"/>
    <property type="molecule type" value="Genomic_DNA"/>
</dbReference>
<dbReference type="CCDS" id="CCDS47778.1"/>
<dbReference type="RefSeq" id="NP_001384316.1">
    <property type="nucleotide sequence ID" value="NM_001397387.1"/>
</dbReference>
<dbReference type="STRING" id="9606.ENSP00000497076"/>
<dbReference type="iPTMnet" id="A6NKC0"/>
<dbReference type="PhosphoSitePlus" id="A6NKC0"/>
<dbReference type="BioMuta" id="HGNC:32255"/>
<dbReference type="MassIVE" id="A6NKC0"/>
<dbReference type="Ensembl" id="ENST00000650288.1">
    <property type="protein sequence ID" value="ENSP00000497076.1"/>
    <property type="gene ID" value="ENSG00000285975.1"/>
</dbReference>
<dbReference type="GeneID" id="441317"/>
<dbReference type="MANE-Select" id="ENST00000650288.1">
    <property type="protein sequence ID" value="ENSP00000497076.1"/>
    <property type="RefSeq nucleotide sequence ID" value="NM_001397387.1"/>
    <property type="RefSeq protein sequence ID" value="NP_001384316.1"/>
</dbReference>
<dbReference type="AGR" id="HGNC:32255"/>
<dbReference type="GeneCards" id="FAM90A7"/>
<dbReference type="HGNC" id="HGNC:32255">
    <property type="gene designation" value="FAM90A7"/>
</dbReference>
<dbReference type="HPA" id="ENSG00000285975">
    <property type="expression patterns" value="Not detected"/>
</dbReference>
<dbReference type="MIM" id="613044">
    <property type="type" value="gene"/>
</dbReference>
<dbReference type="neXtProt" id="NX_A6NKC0"/>
<dbReference type="VEuPathDB" id="HostDB:ENSG00000285975"/>
<dbReference type="GeneTree" id="ENSGT00910000144208"/>
<dbReference type="InParanoid" id="A6NKC0"/>
<dbReference type="PAN-GO" id="A6NKC0">
    <property type="GO annotations" value="0 GO annotations based on evolutionary models"/>
</dbReference>
<dbReference type="PhylomeDB" id="A6NKC0"/>
<dbReference type="PathwayCommons" id="A6NKC0"/>
<dbReference type="ChiTaRS" id="FAM90A7P">
    <property type="organism name" value="human"/>
</dbReference>
<dbReference type="Pharos" id="A6NKC0">
    <property type="development level" value="Tdark"/>
</dbReference>
<dbReference type="Proteomes" id="UP000005640">
    <property type="component" value="Chromosome 8"/>
</dbReference>
<dbReference type="RNAct" id="A6NKC0">
    <property type="molecule type" value="protein"/>
</dbReference>
<dbReference type="InterPro" id="IPR039213">
    <property type="entry name" value="FAM90"/>
</dbReference>
<dbReference type="InterPro" id="IPR041670">
    <property type="entry name" value="Znf-CCHC_6"/>
</dbReference>
<dbReference type="PANTHER" id="PTHR16035:SF14">
    <property type="entry name" value="FAMILY WITH SEQUENCE SIMILARITY 90 MEMBER A11, PSEUDOGENE-RELATED"/>
    <property type="match status" value="1"/>
</dbReference>
<dbReference type="PANTHER" id="PTHR16035">
    <property type="entry name" value="PROTEIN FAM90A1"/>
    <property type="match status" value="1"/>
</dbReference>
<dbReference type="Pfam" id="PF15288">
    <property type="entry name" value="zf-CCHC_6"/>
    <property type="match status" value="1"/>
</dbReference>
<organism>
    <name type="scientific">Homo sapiens</name>
    <name type="common">Human</name>
    <dbReference type="NCBI Taxonomy" id="9606"/>
    <lineage>
        <taxon>Eukaryota</taxon>
        <taxon>Metazoa</taxon>
        <taxon>Chordata</taxon>
        <taxon>Craniata</taxon>
        <taxon>Vertebrata</taxon>
        <taxon>Euteleostomi</taxon>
        <taxon>Mammalia</taxon>
        <taxon>Eutheria</taxon>
        <taxon>Euarchontoglires</taxon>
        <taxon>Primates</taxon>
        <taxon>Haplorrhini</taxon>
        <taxon>Catarrhini</taxon>
        <taxon>Hominidae</taxon>
        <taxon>Homo</taxon>
    </lineage>
</organism>
<proteinExistence type="inferred from homology"/>
<feature type="chain" id="PRO_0000299593" description="Protein FAM90A7">
    <location>
        <begin position="1"/>
        <end position="464"/>
    </location>
</feature>
<feature type="region of interest" description="Disordered" evidence="1">
    <location>
        <begin position="1"/>
        <end position="42"/>
    </location>
</feature>
<feature type="region of interest" description="Disordered" evidence="1">
    <location>
        <begin position="69"/>
        <end position="387"/>
    </location>
</feature>
<feature type="region of interest" description="Disordered" evidence="1">
    <location>
        <begin position="410"/>
        <end position="437"/>
    </location>
</feature>
<feature type="compositionally biased region" description="Basic and acidic residues" evidence="1">
    <location>
        <begin position="74"/>
        <end position="89"/>
    </location>
</feature>
<feature type="compositionally biased region" description="Basic and acidic residues" evidence="1">
    <location>
        <begin position="97"/>
        <end position="111"/>
    </location>
</feature>
<feature type="compositionally biased region" description="Low complexity" evidence="1">
    <location>
        <begin position="180"/>
        <end position="197"/>
    </location>
</feature>
<protein>
    <recommendedName>
        <fullName>Protein FAM90A7</fullName>
    </recommendedName>
</protein>
<gene>
    <name evidence="3" type="primary">FAM90A7</name>
    <name type="synonym">FAM90A7P</name>
</gene>
<evidence type="ECO:0000256" key="1">
    <source>
        <dbReference type="SAM" id="MobiDB-lite"/>
    </source>
</evidence>
<evidence type="ECO:0000305" key="2"/>
<evidence type="ECO:0000312" key="3">
    <source>
        <dbReference type="HGNC" id="HGNC:32255"/>
    </source>
</evidence>
<comment type="similarity">
    <text evidence="2">Belongs to the FAM90 family.</text>
</comment>
<sequence>MMARRDPKSWAKRLVRAQTLQKQRRAPVGPRSPPPDEEDPRLKCKNCGAFGHTARSTRCPMKCWKAALVPATLGKKEGKENLKPWKPRAEANPGPLNKDKGEKEERPRQQDPQRNALLHMFSGKPPEKPLPNGKGSTESSEHLRVASGPMPVHTTSKRPRVDPVLADRSATEMSGRGSVLASLSPLRKASLSSSSSLGPKERQTGAAADIPQPAFRHQGPEPLLVVKPTHSSPEGGCREVPQAASKTHGLLQAVRPQAQDKRPAVTSQPCPPAATHSLGLGSNLSFGPGAKRPAQAPIQACLNFPKKPRLGPFQIPESAIQGGELRAPENLQPPPAATELGPSTSPQMGRRTPAQVPSVDRQPPHSTPCLPTAQACTMSHHPAAGHDGAQPLRVLFRRLENGRWSSSLLAAPSFHSPEKPGAFLAQSPHVSEKSEAPCVRVPPSVLYEDLQVSSSSEDSDSDLE</sequence>
<name>F90A7_HUMAN</name>
<accession>A6NKC0</accession>
<reference key="1">
    <citation type="journal article" date="2006" name="Nature">
        <title>DNA sequence and analysis of human chromosome 8.</title>
        <authorList>
            <person name="Nusbaum C."/>
            <person name="Mikkelsen T.S."/>
            <person name="Zody M.C."/>
            <person name="Asakawa S."/>
            <person name="Taudien S."/>
            <person name="Garber M."/>
            <person name="Kodira C.D."/>
            <person name="Schueler M.G."/>
            <person name="Shimizu A."/>
            <person name="Whittaker C.A."/>
            <person name="Chang J.L."/>
            <person name="Cuomo C.A."/>
            <person name="Dewar K."/>
            <person name="FitzGerald M.G."/>
            <person name="Yang X."/>
            <person name="Allen N.R."/>
            <person name="Anderson S."/>
            <person name="Asakawa T."/>
            <person name="Blechschmidt K."/>
            <person name="Bloom T."/>
            <person name="Borowsky M.L."/>
            <person name="Butler J."/>
            <person name="Cook A."/>
            <person name="Corum B."/>
            <person name="DeArellano K."/>
            <person name="DeCaprio D."/>
            <person name="Dooley K.T."/>
            <person name="Dorris L. III"/>
            <person name="Engels R."/>
            <person name="Gloeckner G."/>
            <person name="Hafez N."/>
            <person name="Hagopian D.S."/>
            <person name="Hall J.L."/>
            <person name="Ishikawa S.K."/>
            <person name="Jaffe D.B."/>
            <person name="Kamat A."/>
            <person name="Kudoh J."/>
            <person name="Lehmann R."/>
            <person name="Lokitsang T."/>
            <person name="Macdonald P."/>
            <person name="Major J.E."/>
            <person name="Matthews C.D."/>
            <person name="Mauceli E."/>
            <person name="Menzel U."/>
            <person name="Mihalev A.H."/>
            <person name="Minoshima S."/>
            <person name="Murayama Y."/>
            <person name="Naylor J.W."/>
            <person name="Nicol R."/>
            <person name="Nguyen C."/>
            <person name="O'Leary S.B."/>
            <person name="O'Neill K."/>
            <person name="Parker S.C.J."/>
            <person name="Polley A."/>
            <person name="Raymond C.K."/>
            <person name="Reichwald K."/>
            <person name="Rodriguez J."/>
            <person name="Sasaki T."/>
            <person name="Schilhabel M."/>
            <person name="Siddiqui R."/>
            <person name="Smith C.L."/>
            <person name="Sneddon T.P."/>
            <person name="Talamas J.A."/>
            <person name="Tenzin P."/>
            <person name="Topham K."/>
            <person name="Venkataraman V."/>
            <person name="Wen G."/>
            <person name="Yamazaki S."/>
            <person name="Young S.K."/>
            <person name="Zeng Q."/>
            <person name="Zimmer A.R."/>
            <person name="Rosenthal A."/>
            <person name="Birren B.W."/>
            <person name="Platzer M."/>
            <person name="Shimizu N."/>
            <person name="Lander E.S."/>
        </authorList>
    </citation>
    <scope>NUCLEOTIDE SEQUENCE [LARGE SCALE GENOMIC DNA]</scope>
</reference>